<name>RS15_MYCS5</name>
<dbReference type="EMBL" id="AE017245">
    <property type="protein sequence ID" value="AAZ43970.1"/>
    <property type="molecule type" value="Genomic_DNA"/>
</dbReference>
<dbReference type="RefSeq" id="WP_011283699.1">
    <property type="nucleotide sequence ID" value="NC_007294.1"/>
</dbReference>
<dbReference type="SMR" id="Q4A5K1"/>
<dbReference type="STRING" id="262723.MS53_0562"/>
<dbReference type="KEGG" id="msy:MS53_0562"/>
<dbReference type="eggNOG" id="COG0184">
    <property type="taxonomic scope" value="Bacteria"/>
</dbReference>
<dbReference type="HOGENOM" id="CLU_148518_0_0_14"/>
<dbReference type="OrthoDB" id="9799262at2"/>
<dbReference type="Proteomes" id="UP000000549">
    <property type="component" value="Chromosome"/>
</dbReference>
<dbReference type="GO" id="GO:0022627">
    <property type="term" value="C:cytosolic small ribosomal subunit"/>
    <property type="evidence" value="ECO:0007669"/>
    <property type="project" value="TreeGrafter"/>
</dbReference>
<dbReference type="GO" id="GO:0019843">
    <property type="term" value="F:rRNA binding"/>
    <property type="evidence" value="ECO:0007669"/>
    <property type="project" value="UniProtKB-UniRule"/>
</dbReference>
<dbReference type="GO" id="GO:0003735">
    <property type="term" value="F:structural constituent of ribosome"/>
    <property type="evidence" value="ECO:0007669"/>
    <property type="project" value="InterPro"/>
</dbReference>
<dbReference type="GO" id="GO:0006412">
    <property type="term" value="P:translation"/>
    <property type="evidence" value="ECO:0007669"/>
    <property type="project" value="UniProtKB-UniRule"/>
</dbReference>
<dbReference type="CDD" id="cd00353">
    <property type="entry name" value="Ribosomal_S15p_S13e"/>
    <property type="match status" value="1"/>
</dbReference>
<dbReference type="Gene3D" id="6.10.250.3130">
    <property type="match status" value="1"/>
</dbReference>
<dbReference type="Gene3D" id="1.10.287.10">
    <property type="entry name" value="S15/NS1, RNA-binding"/>
    <property type="match status" value="1"/>
</dbReference>
<dbReference type="HAMAP" id="MF_01343_B">
    <property type="entry name" value="Ribosomal_uS15_B"/>
    <property type="match status" value="1"/>
</dbReference>
<dbReference type="InterPro" id="IPR000589">
    <property type="entry name" value="Ribosomal_uS15"/>
</dbReference>
<dbReference type="InterPro" id="IPR005290">
    <property type="entry name" value="Ribosomal_uS15_bac-type"/>
</dbReference>
<dbReference type="InterPro" id="IPR009068">
    <property type="entry name" value="uS15_NS1_RNA-bd_sf"/>
</dbReference>
<dbReference type="NCBIfam" id="TIGR00952">
    <property type="entry name" value="S15_bact"/>
    <property type="match status" value="1"/>
</dbReference>
<dbReference type="PANTHER" id="PTHR23321">
    <property type="entry name" value="RIBOSOMAL PROTEIN S15, BACTERIAL AND ORGANELLAR"/>
    <property type="match status" value="1"/>
</dbReference>
<dbReference type="PANTHER" id="PTHR23321:SF26">
    <property type="entry name" value="SMALL RIBOSOMAL SUBUNIT PROTEIN US15M"/>
    <property type="match status" value="1"/>
</dbReference>
<dbReference type="Pfam" id="PF00312">
    <property type="entry name" value="Ribosomal_S15"/>
    <property type="match status" value="1"/>
</dbReference>
<dbReference type="SMART" id="SM01387">
    <property type="entry name" value="Ribosomal_S15"/>
    <property type="match status" value="1"/>
</dbReference>
<dbReference type="SUPFAM" id="SSF47060">
    <property type="entry name" value="S15/NS1 RNA-binding domain"/>
    <property type="match status" value="1"/>
</dbReference>
<dbReference type="PROSITE" id="PS00362">
    <property type="entry name" value="RIBOSOMAL_S15"/>
    <property type="match status" value="1"/>
</dbReference>
<feature type="chain" id="PRO_0000115486" description="Small ribosomal subunit protein uS15">
    <location>
        <begin position="1"/>
        <end position="88"/>
    </location>
</feature>
<gene>
    <name evidence="1" type="primary">rpsO</name>
    <name type="ordered locus">MS53_0562</name>
</gene>
<keyword id="KW-1185">Reference proteome</keyword>
<keyword id="KW-0687">Ribonucleoprotein</keyword>
<keyword id="KW-0689">Ribosomal protein</keyword>
<keyword id="KW-0694">RNA-binding</keyword>
<keyword id="KW-0699">rRNA-binding</keyword>
<proteinExistence type="inferred from homology"/>
<comment type="function">
    <text evidence="1">One of the primary rRNA binding proteins, it binds directly to 16S rRNA where it helps nucleate assembly of the platform of the 30S subunit by binding and bridging several RNA helices of the 16S rRNA.</text>
</comment>
<comment type="function">
    <text evidence="1">Forms an intersubunit bridge (bridge B4) with the 23S rRNA of the 50S subunit in the ribosome.</text>
</comment>
<comment type="subunit">
    <text evidence="1">Part of the 30S ribosomal subunit. Forms a bridge to the 50S subunit in the 70S ribosome, contacting the 23S rRNA.</text>
</comment>
<comment type="similarity">
    <text evidence="1">Belongs to the universal ribosomal protein uS15 family.</text>
</comment>
<reference key="1">
    <citation type="journal article" date="2005" name="J. Bacteriol.">
        <title>Swine and poultry pathogens: the complete genome sequences of two strains of Mycoplasma hyopneumoniae and a strain of Mycoplasma synoviae.</title>
        <authorList>
            <person name="Vasconcelos A.T.R."/>
            <person name="Ferreira H.B."/>
            <person name="Bizarro C.V."/>
            <person name="Bonatto S.L."/>
            <person name="Carvalho M.O."/>
            <person name="Pinto P.M."/>
            <person name="Almeida D.F."/>
            <person name="Almeida L.G.P."/>
            <person name="Almeida R."/>
            <person name="Alves-Junior L."/>
            <person name="Assuncao E.N."/>
            <person name="Azevedo V.A.C."/>
            <person name="Bogo M.R."/>
            <person name="Brigido M.M."/>
            <person name="Brocchi M."/>
            <person name="Burity H.A."/>
            <person name="Camargo A.A."/>
            <person name="Camargo S.S."/>
            <person name="Carepo M.S."/>
            <person name="Carraro D.M."/>
            <person name="de Mattos Cascardo J.C."/>
            <person name="Castro L.A."/>
            <person name="Cavalcanti G."/>
            <person name="Chemale G."/>
            <person name="Collevatti R.G."/>
            <person name="Cunha C.W."/>
            <person name="Dallagiovanna B."/>
            <person name="Dambros B.P."/>
            <person name="Dellagostin O.A."/>
            <person name="Falcao C."/>
            <person name="Fantinatti-Garboggini F."/>
            <person name="Felipe M.S.S."/>
            <person name="Fiorentin L."/>
            <person name="Franco G.R."/>
            <person name="Freitas N.S.A."/>
            <person name="Frias D."/>
            <person name="Grangeiro T.B."/>
            <person name="Grisard E.C."/>
            <person name="Guimaraes C.T."/>
            <person name="Hungria M."/>
            <person name="Jardim S.N."/>
            <person name="Krieger M.A."/>
            <person name="Laurino J.P."/>
            <person name="Lima L.F.A."/>
            <person name="Lopes M.I."/>
            <person name="Loreto E.L.S."/>
            <person name="Madeira H.M.F."/>
            <person name="Manfio G.P."/>
            <person name="Maranhao A.Q."/>
            <person name="Martinkovics C.T."/>
            <person name="Medeiros S.R.B."/>
            <person name="Moreira M.A.M."/>
            <person name="Neiva M."/>
            <person name="Ramalho-Neto C.E."/>
            <person name="Nicolas M.F."/>
            <person name="Oliveira S.C."/>
            <person name="Paixao R.F.C."/>
            <person name="Pedrosa F.O."/>
            <person name="Pena S.D.J."/>
            <person name="Pereira M."/>
            <person name="Pereira-Ferrari L."/>
            <person name="Piffer I."/>
            <person name="Pinto L.S."/>
            <person name="Potrich D.P."/>
            <person name="Salim A.C.M."/>
            <person name="Santos F.R."/>
            <person name="Schmitt R."/>
            <person name="Schneider M.P.C."/>
            <person name="Schrank A."/>
            <person name="Schrank I.S."/>
            <person name="Schuck A.F."/>
            <person name="Seuanez H.N."/>
            <person name="Silva D.W."/>
            <person name="Silva R."/>
            <person name="Silva S.C."/>
            <person name="Soares C.M.A."/>
            <person name="Souza K.R.L."/>
            <person name="Souza R.C."/>
            <person name="Staats C.C."/>
            <person name="Steffens M.B.R."/>
            <person name="Teixeira S.M.R."/>
            <person name="Urmenyi T.P."/>
            <person name="Vainstein M.H."/>
            <person name="Zuccherato L.W."/>
            <person name="Simpson A.J.G."/>
            <person name="Zaha A."/>
        </authorList>
    </citation>
    <scope>NUCLEOTIDE SEQUENCE [LARGE SCALE GENOMIC DNA]</scope>
    <source>
        <strain>53</strain>
    </source>
</reference>
<organism>
    <name type="scientific">Mycoplasmopsis synoviae (strain 53)</name>
    <name type="common">Mycoplasma synoviae</name>
    <dbReference type="NCBI Taxonomy" id="262723"/>
    <lineage>
        <taxon>Bacteria</taxon>
        <taxon>Bacillati</taxon>
        <taxon>Mycoplasmatota</taxon>
        <taxon>Mycoplasmoidales</taxon>
        <taxon>Metamycoplasmataceae</taxon>
        <taxon>Mycoplasmopsis</taxon>
    </lineage>
</organism>
<evidence type="ECO:0000255" key="1">
    <source>
        <dbReference type="HAMAP-Rule" id="MF_01343"/>
    </source>
</evidence>
<evidence type="ECO:0000305" key="2"/>
<accession>Q4A5K1</accession>
<protein>
    <recommendedName>
        <fullName evidence="1">Small ribosomal subunit protein uS15</fullName>
    </recommendedName>
    <alternativeName>
        <fullName evidence="2">30S ribosomal protein S15</fullName>
    </alternativeName>
</protein>
<sequence>MISKQEKKLLVKKYGKNEKDTGNAFVQVALLTHDIEKLKPHFQANPKDFHSRRGFLAKITQRKTLLAYLKKNDPETYLKCLEEFKLRK</sequence>